<gene>
    <name evidence="1" type="primary">rpsO</name>
    <name type="ordered locus">OB1603</name>
</gene>
<sequence length="89" mass="10589">MAITQERKNEIISEYKVHETDTGSPEVQIAVLTEEITSLNEHLRVHKKDHHSRRGLLKMVGKRRNLLTYLRNKDVTRYRELIKKLGLRR</sequence>
<accession>Q8EQT8</accession>
<dbReference type="EMBL" id="BA000028">
    <property type="protein sequence ID" value="BAC13559.1"/>
    <property type="molecule type" value="Genomic_DNA"/>
</dbReference>
<dbReference type="RefSeq" id="WP_011066003.1">
    <property type="nucleotide sequence ID" value="NC_004193.1"/>
</dbReference>
<dbReference type="SMR" id="Q8EQT8"/>
<dbReference type="STRING" id="221109.gene:10733843"/>
<dbReference type="KEGG" id="oih:OB1603"/>
<dbReference type="eggNOG" id="COG0184">
    <property type="taxonomic scope" value="Bacteria"/>
</dbReference>
<dbReference type="HOGENOM" id="CLU_148518_0_0_9"/>
<dbReference type="OrthoDB" id="9799262at2"/>
<dbReference type="PhylomeDB" id="Q8EQT8"/>
<dbReference type="Proteomes" id="UP000000822">
    <property type="component" value="Chromosome"/>
</dbReference>
<dbReference type="GO" id="GO:0022627">
    <property type="term" value="C:cytosolic small ribosomal subunit"/>
    <property type="evidence" value="ECO:0007669"/>
    <property type="project" value="TreeGrafter"/>
</dbReference>
<dbReference type="GO" id="GO:0019843">
    <property type="term" value="F:rRNA binding"/>
    <property type="evidence" value="ECO:0007669"/>
    <property type="project" value="UniProtKB-UniRule"/>
</dbReference>
<dbReference type="GO" id="GO:0003735">
    <property type="term" value="F:structural constituent of ribosome"/>
    <property type="evidence" value="ECO:0007669"/>
    <property type="project" value="InterPro"/>
</dbReference>
<dbReference type="GO" id="GO:0006412">
    <property type="term" value="P:translation"/>
    <property type="evidence" value="ECO:0007669"/>
    <property type="project" value="UniProtKB-UniRule"/>
</dbReference>
<dbReference type="CDD" id="cd00353">
    <property type="entry name" value="Ribosomal_S15p_S13e"/>
    <property type="match status" value="1"/>
</dbReference>
<dbReference type="FunFam" id="1.10.287.10:FF:000002">
    <property type="entry name" value="30S ribosomal protein S15"/>
    <property type="match status" value="1"/>
</dbReference>
<dbReference type="Gene3D" id="6.10.250.3130">
    <property type="match status" value="1"/>
</dbReference>
<dbReference type="Gene3D" id="1.10.287.10">
    <property type="entry name" value="S15/NS1, RNA-binding"/>
    <property type="match status" value="1"/>
</dbReference>
<dbReference type="HAMAP" id="MF_01343_B">
    <property type="entry name" value="Ribosomal_uS15_B"/>
    <property type="match status" value="1"/>
</dbReference>
<dbReference type="InterPro" id="IPR000589">
    <property type="entry name" value="Ribosomal_uS15"/>
</dbReference>
<dbReference type="InterPro" id="IPR005290">
    <property type="entry name" value="Ribosomal_uS15_bac-type"/>
</dbReference>
<dbReference type="InterPro" id="IPR009068">
    <property type="entry name" value="uS15_NS1_RNA-bd_sf"/>
</dbReference>
<dbReference type="NCBIfam" id="TIGR00952">
    <property type="entry name" value="S15_bact"/>
    <property type="match status" value="1"/>
</dbReference>
<dbReference type="PANTHER" id="PTHR23321">
    <property type="entry name" value="RIBOSOMAL PROTEIN S15, BACTERIAL AND ORGANELLAR"/>
    <property type="match status" value="1"/>
</dbReference>
<dbReference type="PANTHER" id="PTHR23321:SF26">
    <property type="entry name" value="SMALL RIBOSOMAL SUBUNIT PROTEIN US15M"/>
    <property type="match status" value="1"/>
</dbReference>
<dbReference type="Pfam" id="PF00312">
    <property type="entry name" value="Ribosomal_S15"/>
    <property type="match status" value="1"/>
</dbReference>
<dbReference type="SMART" id="SM01387">
    <property type="entry name" value="Ribosomal_S15"/>
    <property type="match status" value="1"/>
</dbReference>
<dbReference type="SUPFAM" id="SSF47060">
    <property type="entry name" value="S15/NS1 RNA-binding domain"/>
    <property type="match status" value="1"/>
</dbReference>
<dbReference type="PROSITE" id="PS00362">
    <property type="entry name" value="RIBOSOMAL_S15"/>
    <property type="match status" value="1"/>
</dbReference>
<name>RS15_OCEIH</name>
<evidence type="ECO:0000255" key="1">
    <source>
        <dbReference type="HAMAP-Rule" id="MF_01343"/>
    </source>
</evidence>
<evidence type="ECO:0000305" key="2"/>
<organism>
    <name type="scientific">Oceanobacillus iheyensis (strain DSM 14371 / CIP 107618 / JCM 11309 / KCTC 3954 / HTE831)</name>
    <dbReference type="NCBI Taxonomy" id="221109"/>
    <lineage>
        <taxon>Bacteria</taxon>
        <taxon>Bacillati</taxon>
        <taxon>Bacillota</taxon>
        <taxon>Bacilli</taxon>
        <taxon>Bacillales</taxon>
        <taxon>Bacillaceae</taxon>
        <taxon>Oceanobacillus</taxon>
    </lineage>
</organism>
<reference key="1">
    <citation type="journal article" date="2002" name="Nucleic Acids Res.">
        <title>Genome sequence of Oceanobacillus iheyensis isolated from the Iheya Ridge and its unexpected adaptive capabilities to extreme environments.</title>
        <authorList>
            <person name="Takami H."/>
            <person name="Takaki Y."/>
            <person name="Uchiyama I."/>
        </authorList>
    </citation>
    <scope>NUCLEOTIDE SEQUENCE [LARGE SCALE GENOMIC DNA]</scope>
    <source>
        <strain>DSM 14371 / CIP 107618 / JCM 11309 / KCTC 3954 / HTE831</strain>
    </source>
</reference>
<feature type="chain" id="PRO_0000115494" description="Small ribosomal subunit protein uS15">
    <location>
        <begin position="1"/>
        <end position="89"/>
    </location>
</feature>
<keyword id="KW-1185">Reference proteome</keyword>
<keyword id="KW-0687">Ribonucleoprotein</keyword>
<keyword id="KW-0689">Ribosomal protein</keyword>
<keyword id="KW-0694">RNA-binding</keyword>
<keyword id="KW-0699">rRNA-binding</keyword>
<comment type="function">
    <text evidence="1">One of the primary rRNA binding proteins, it binds directly to 16S rRNA where it helps nucleate assembly of the platform of the 30S subunit by binding and bridging several RNA helices of the 16S rRNA.</text>
</comment>
<comment type="function">
    <text evidence="1">Forms an intersubunit bridge (bridge B4) with the 23S rRNA of the 50S subunit in the ribosome.</text>
</comment>
<comment type="subunit">
    <text evidence="1">Part of the 30S ribosomal subunit. Forms a bridge to the 50S subunit in the 70S ribosome, contacting the 23S rRNA.</text>
</comment>
<comment type="similarity">
    <text evidence="1">Belongs to the universal ribosomal protein uS15 family.</text>
</comment>
<proteinExistence type="inferred from homology"/>
<protein>
    <recommendedName>
        <fullName evidence="1">Small ribosomal subunit protein uS15</fullName>
    </recommendedName>
    <alternativeName>
        <fullName evidence="2">30S ribosomal protein S15</fullName>
    </alternativeName>
</protein>